<sequence length="379" mass="42746">MTNIRKSHPLMKIINSSFIDLPAPSNISSWWNFGSLLGICLALQILTGLFLAMHYTSDTATAFNSVTHICRDVNYGWILRYLHANGASMFFICLYLHVGRGLYYGSYMYTETWNVGVILLFAVMATAFMGYVLPWGQMSFWGATVITNLLSAIPYIGINLVEWIWGGFSVDKATLTRFFTFHFLFPFIVAAMVMVHLLFLHETGSNNPTGIPSNTDMIPFHPYYTIKDVLGLLLMITALLMLVLFTPDALGDPDNYTPANPLNTPPHIKPEWYFLFAYAILRSIPNKLGGVLALVLSILILIIIPLLHTSKQRSMSFRPLSQCLFWLLVADLLTLTWIGGQPVEHPYVIIGQLASILYFSIIIILMPLISLVENHLLKW</sequence>
<accession>Q7Y8K8</accession>
<protein>
    <recommendedName>
        <fullName>Cytochrome b</fullName>
    </recommendedName>
    <alternativeName>
        <fullName>Complex III subunit 3</fullName>
    </alternativeName>
    <alternativeName>
        <fullName>Complex III subunit III</fullName>
    </alternativeName>
    <alternativeName>
        <fullName>Cytochrome b-c1 complex subunit 3</fullName>
    </alternativeName>
    <alternativeName>
        <fullName>Ubiquinol-cytochrome-c reductase complex cytochrome b subunit</fullName>
    </alternativeName>
</protein>
<gene>
    <name type="primary">MT-CYB</name>
    <name type="synonym">COB</name>
    <name type="synonym">CYTB</name>
    <name type="synonym">MTCYB</name>
</gene>
<reference key="1">
    <citation type="journal article" date="2003" name="Mol. Phylogenet. Evol.">
        <title>The status of the Japanese and East Asian bats of the genus Myotis (Vespertilionidae) based on mitochondrial sequences.</title>
        <authorList>
            <person name="Kawai K."/>
            <person name="Nikaido M."/>
            <person name="Harada M."/>
            <person name="Matsumura S."/>
            <person name="Lin L."/>
            <person name="Wu Y."/>
            <person name="Hasegawa M."/>
            <person name="Okada N."/>
        </authorList>
    </citation>
    <scope>NUCLEOTIDE SEQUENCE [GENOMIC DNA]</scope>
    <source>
        <strain>Isolate SM7365</strain>
    </source>
</reference>
<evidence type="ECO:0000250" key="1"/>
<evidence type="ECO:0000250" key="2">
    <source>
        <dbReference type="UniProtKB" id="P00157"/>
    </source>
</evidence>
<evidence type="ECO:0000255" key="3">
    <source>
        <dbReference type="PROSITE-ProRule" id="PRU00967"/>
    </source>
</evidence>
<evidence type="ECO:0000255" key="4">
    <source>
        <dbReference type="PROSITE-ProRule" id="PRU00968"/>
    </source>
</evidence>
<geneLocation type="mitochondrion"/>
<organism>
    <name type="scientific">Myotis yanbarensis</name>
    <name type="common">Yanbaru whiskered bat</name>
    <dbReference type="NCBI Taxonomy" id="187015"/>
    <lineage>
        <taxon>Eukaryota</taxon>
        <taxon>Metazoa</taxon>
        <taxon>Chordata</taxon>
        <taxon>Craniata</taxon>
        <taxon>Vertebrata</taxon>
        <taxon>Euteleostomi</taxon>
        <taxon>Mammalia</taxon>
        <taxon>Eutheria</taxon>
        <taxon>Laurasiatheria</taxon>
        <taxon>Chiroptera</taxon>
        <taxon>Yangochiroptera</taxon>
        <taxon>Vespertilionidae</taxon>
        <taxon>Myotis</taxon>
    </lineage>
</organism>
<dbReference type="EMBL" id="AB106610">
    <property type="protein sequence ID" value="BAC77816.1"/>
    <property type="molecule type" value="Genomic_DNA"/>
</dbReference>
<dbReference type="SMR" id="Q7Y8K8"/>
<dbReference type="GO" id="GO:0005743">
    <property type="term" value="C:mitochondrial inner membrane"/>
    <property type="evidence" value="ECO:0007669"/>
    <property type="project" value="UniProtKB-SubCell"/>
</dbReference>
<dbReference type="GO" id="GO:0045275">
    <property type="term" value="C:respiratory chain complex III"/>
    <property type="evidence" value="ECO:0007669"/>
    <property type="project" value="InterPro"/>
</dbReference>
<dbReference type="GO" id="GO:0046872">
    <property type="term" value="F:metal ion binding"/>
    <property type="evidence" value="ECO:0007669"/>
    <property type="project" value="UniProtKB-KW"/>
</dbReference>
<dbReference type="GO" id="GO:0008121">
    <property type="term" value="F:ubiquinol-cytochrome-c reductase activity"/>
    <property type="evidence" value="ECO:0007669"/>
    <property type="project" value="InterPro"/>
</dbReference>
<dbReference type="GO" id="GO:0006122">
    <property type="term" value="P:mitochondrial electron transport, ubiquinol to cytochrome c"/>
    <property type="evidence" value="ECO:0007669"/>
    <property type="project" value="TreeGrafter"/>
</dbReference>
<dbReference type="CDD" id="cd00290">
    <property type="entry name" value="cytochrome_b_C"/>
    <property type="match status" value="1"/>
</dbReference>
<dbReference type="CDD" id="cd00284">
    <property type="entry name" value="Cytochrome_b_N"/>
    <property type="match status" value="1"/>
</dbReference>
<dbReference type="FunFam" id="1.20.810.10:FF:000002">
    <property type="entry name" value="Cytochrome b"/>
    <property type="match status" value="1"/>
</dbReference>
<dbReference type="Gene3D" id="1.20.810.10">
    <property type="entry name" value="Cytochrome Bc1 Complex, Chain C"/>
    <property type="match status" value="1"/>
</dbReference>
<dbReference type="InterPro" id="IPR005798">
    <property type="entry name" value="Cyt_b/b6_C"/>
</dbReference>
<dbReference type="InterPro" id="IPR036150">
    <property type="entry name" value="Cyt_b/b6_C_sf"/>
</dbReference>
<dbReference type="InterPro" id="IPR005797">
    <property type="entry name" value="Cyt_b/b6_N"/>
</dbReference>
<dbReference type="InterPro" id="IPR027387">
    <property type="entry name" value="Cytb/b6-like_sf"/>
</dbReference>
<dbReference type="InterPro" id="IPR030689">
    <property type="entry name" value="Cytochrome_b"/>
</dbReference>
<dbReference type="InterPro" id="IPR048260">
    <property type="entry name" value="Cytochrome_b_C_euk/bac"/>
</dbReference>
<dbReference type="InterPro" id="IPR048259">
    <property type="entry name" value="Cytochrome_b_N_euk/bac"/>
</dbReference>
<dbReference type="InterPro" id="IPR016174">
    <property type="entry name" value="Di-haem_cyt_TM"/>
</dbReference>
<dbReference type="PANTHER" id="PTHR19271">
    <property type="entry name" value="CYTOCHROME B"/>
    <property type="match status" value="1"/>
</dbReference>
<dbReference type="PANTHER" id="PTHR19271:SF16">
    <property type="entry name" value="CYTOCHROME B"/>
    <property type="match status" value="1"/>
</dbReference>
<dbReference type="Pfam" id="PF00032">
    <property type="entry name" value="Cytochrom_B_C"/>
    <property type="match status" value="1"/>
</dbReference>
<dbReference type="Pfam" id="PF00033">
    <property type="entry name" value="Cytochrome_B"/>
    <property type="match status" value="1"/>
</dbReference>
<dbReference type="PIRSF" id="PIRSF038885">
    <property type="entry name" value="COB"/>
    <property type="match status" value="1"/>
</dbReference>
<dbReference type="SUPFAM" id="SSF81648">
    <property type="entry name" value="a domain/subunit of cytochrome bc1 complex (Ubiquinol-cytochrome c reductase)"/>
    <property type="match status" value="1"/>
</dbReference>
<dbReference type="SUPFAM" id="SSF81342">
    <property type="entry name" value="Transmembrane di-heme cytochromes"/>
    <property type="match status" value="1"/>
</dbReference>
<dbReference type="PROSITE" id="PS51003">
    <property type="entry name" value="CYTB_CTER"/>
    <property type="match status" value="1"/>
</dbReference>
<dbReference type="PROSITE" id="PS51002">
    <property type="entry name" value="CYTB_NTER"/>
    <property type="match status" value="1"/>
</dbReference>
<feature type="chain" id="PRO_0000061257" description="Cytochrome b">
    <location>
        <begin position="1"/>
        <end position="379"/>
    </location>
</feature>
<feature type="transmembrane region" description="Helical" evidence="2">
    <location>
        <begin position="33"/>
        <end position="53"/>
    </location>
</feature>
<feature type="transmembrane region" description="Helical" evidence="2">
    <location>
        <begin position="77"/>
        <end position="98"/>
    </location>
</feature>
<feature type="transmembrane region" description="Helical" evidence="2">
    <location>
        <begin position="113"/>
        <end position="133"/>
    </location>
</feature>
<feature type="transmembrane region" description="Helical" evidence="2">
    <location>
        <begin position="178"/>
        <end position="198"/>
    </location>
</feature>
<feature type="transmembrane region" description="Helical" evidence="2">
    <location>
        <begin position="226"/>
        <end position="246"/>
    </location>
</feature>
<feature type="transmembrane region" description="Helical" evidence="2">
    <location>
        <begin position="288"/>
        <end position="308"/>
    </location>
</feature>
<feature type="transmembrane region" description="Helical" evidence="2">
    <location>
        <begin position="320"/>
        <end position="340"/>
    </location>
</feature>
<feature type="transmembrane region" description="Helical" evidence="2">
    <location>
        <begin position="347"/>
        <end position="367"/>
    </location>
</feature>
<feature type="binding site" description="axial binding residue" evidence="2">
    <location>
        <position position="83"/>
    </location>
    <ligand>
        <name>heme b</name>
        <dbReference type="ChEBI" id="CHEBI:60344"/>
        <label>b562</label>
    </ligand>
    <ligandPart>
        <name>Fe</name>
        <dbReference type="ChEBI" id="CHEBI:18248"/>
    </ligandPart>
</feature>
<feature type="binding site" description="axial binding residue" evidence="2">
    <location>
        <position position="97"/>
    </location>
    <ligand>
        <name>heme b</name>
        <dbReference type="ChEBI" id="CHEBI:60344"/>
        <label>b566</label>
    </ligand>
    <ligandPart>
        <name>Fe</name>
        <dbReference type="ChEBI" id="CHEBI:18248"/>
    </ligandPart>
</feature>
<feature type="binding site" description="axial binding residue" evidence="2">
    <location>
        <position position="182"/>
    </location>
    <ligand>
        <name>heme b</name>
        <dbReference type="ChEBI" id="CHEBI:60344"/>
        <label>b562</label>
    </ligand>
    <ligandPart>
        <name>Fe</name>
        <dbReference type="ChEBI" id="CHEBI:18248"/>
    </ligandPart>
</feature>
<feature type="binding site" description="axial binding residue" evidence="2">
    <location>
        <position position="196"/>
    </location>
    <ligand>
        <name>heme b</name>
        <dbReference type="ChEBI" id="CHEBI:60344"/>
        <label>b566</label>
    </ligand>
    <ligandPart>
        <name>Fe</name>
        <dbReference type="ChEBI" id="CHEBI:18248"/>
    </ligandPart>
</feature>
<feature type="binding site" evidence="2">
    <location>
        <position position="201"/>
    </location>
    <ligand>
        <name>a ubiquinone</name>
        <dbReference type="ChEBI" id="CHEBI:16389"/>
    </ligand>
</feature>
<comment type="function">
    <text evidence="2">Component of the ubiquinol-cytochrome c reductase complex (complex III or cytochrome b-c1 complex) that is part of the mitochondrial respiratory chain. The b-c1 complex mediates electron transfer from ubiquinol to cytochrome c. Contributes to the generation of a proton gradient across the mitochondrial membrane that is then used for ATP synthesis.</text>
</comment>
<comment type="cofactor">
    <cofactor evidence="2">
        <name>heme b</name>
        <dbReference type="ChEBI" id="CHEBI:60344"/>
    </cofactor>
    <text evidence="2">Binds 2 heme b groups non-covalently.</text>
</comment>
<comment type="subunit">
    <text evidence="2">The cytochrome bc1 complex contains 11 subunits: 3 respiratory subunits (MT-CYB, CYC1 and UQCRFS1), 2 core proteins (UQCRC1 and UQCRC2) and 6 low-molecular weight proteins (UQCRH/QCR6, UQCRB/QCR7, UQCRQ/QCR8, UQCR10/QCR9, UQCR11/QCR10 and a cleavage product of UQCRFS1). This cytochrome bc1 complex then forms a dimer.</text>
</comment>
<comment type="subcellular location">
    <subcellularLocation>
        <location evidence="2">Mitochondrion inner membrane</location>
        <topology evidence="2">Multi-pass membrane protein</topology>
    </subcellularLocation>
</comment>
<comment type="miscellaneous">
    <text evidence="1">Heme 1 (or BL or b562) is low-potential and absorbs at about 562 nm, and heme 2 (or BH or b566) is high-potential and absorbs at about 566 nm.</text>
</comment>
<comment type="similarity">
    <text evidence="3 4">Belongs to the cytochrome b family.</text>
</comment>
<comment type="caution">
    <text evidence="2">The full-length protein contains only eight transmembrane helices, not nine as predicted by bioinformatics tools.</text>
</comment>
<name>CYB_MYOYA</name>
<proteinExistence type="inferred from homology"/>
<keyword id="KW-0249">Electron transport</keyword>
<keyword id="KW-0349">Heme</keyword>
<keyword id="KW-0408">Iron</keyword>
<keyword id="KW-0472">Membrane</keyword>
<keyword id="KW-0479">Metal-binding</keyword>
<keyword id="KW-0496">Mitochondrion</keyword>
<keyword id="KW-0999">Mitochondrion inner membrane</keyword>
<keyword id="KW-0679">Respiratory chain</keyword>
<keyword id="KW-0812">Transmembrane</keyword>
<keyword id="KW-1133">Transmembrane helix</keyword>
<keyword id="KW-0813">Transport</keyword>
<keyword id="KW-0830">Ubiquinone</keyword>